<evidence type="ECO:0000255" key="1">
    <source>
        <dbReference type="HAMAP-Rule" id="MF_00059"/>
    </source>
</evidence>
<proteinExistence type="inferred from homology"/>
<accession>Q8DE63</accession>
<reference key="1">
    <citation type="submission" date="2002-12" db="EMBL/GenBank/DDBJ databases">
        <title>Complete genome sequence of Vibrio vulnificus CMCP6.</title>
        <authorList>
            <person name="Rhee J.H."/>
            <person name="Kim S.Y."/>
            <person name="Chung S.S."/>
            <person name="Kim J.J."/>
            <person name="Moon Y.H."/>
            <person name="Jeong H."/>
            <person name="Choy H.E."/>
        </authorList>
    </citation>
    <scope>NUCLEOTIDE SEQUENCE [LARGE SCALE GENOMIC DNA]</scope>
    <source>
        <strain>CMCP6</strain>
    </source>
</reference>
<dbReference type="EC" id="2.7.7.6" evidence="1"/>
<dbReference type="EMBL" id="AE016795">
    <property type="protein sequence ID" value="AAO09245.1"/>
    <property type="molecule type" value="Genomic_DNA"/>
</dbReference>
<dbReference type="RefSeq" id="WP_010445384.1">
    <property type="nucleotide sequence ID" value="NC_004459.3"/>
</dbReference>
<dbReference type="SMR" id="Q8DE63"/>
<dbReference type="KEGG" id="vvu:VV1_0736"/>
<dbReference type="HOGENOM" id="CLU_053084_0_0_6"/>
<dbReference type="Proteomes" id="UP000002275">
    <property type="component" value="Chromosome 1"/>
</dbReference>
<dbReference type="GO" id="GO:0005737">
    <property type="term" value="C:cytoplasm"/>
    <property type="evidence" value="ECO:0007669"/>
    <property type="project" value="UniProtKB-ARBA"/>
</dbReference>
<dbReference type="GO" id="GO:0000428">
    <property type="term" value="C:DNA-directed RNA polymerase complex"/>
    <property type="evidence" value="ECO:0007669"/>
    <property type="project" value="UniProtKB-KW"/>
</dbReference>
<dbReference type="GO" id="GO:0003677">
    <property type="term" value="F:DNA binding"/>
    <property type="evidence" value="ECO:0007669"/>
    <property type="project" value="UniProtKB-UniRule"/>
</dbReference>
<dbReference type="GO" id="GO:0003899">
    <property type="term" value="F:DNA-directed RNA polymerase activity"/>
    <property type="evidence" value="ECO:0007669"/>
    <property type="project" value="UniProtKB-UniRule"/>
</dbReference>
<dbReference type="GO" id="GO:0046983">
    <property type="term" value="F:protein dimerization activity"/>
    <property type="evidence" value="ECO:0007669"/>
    <property type="project" value="InterPro"/>
</dbReference>
<dbReference type="GO" id="GO:0006351">
    <property type="term" value="P:DNA-templated transcription"/>
    <property type="evidence" value="ECO:0007669"/>
    <property type="project" value="UniProtKB-UniRule"/>
</dbReference>
<dbReference type="CDD" id="cd06928">
    <property type="entry name" value="RNAP_alpha_NTD"/>
    <property type="match status" value="1"/>
</dbReference>
<dbReference type="FunFam" id="1.10.150.20:FF:000001">
    <property type="entry name" value="DNA-directed RNA polymerase subunit alpha"/>
    <property type="match status" value="1"/>
</dbReference>
<dbReference type="FunFam" id="2.170.120.12:FF:000001">
    <property type="entry name" value="DNA-directed RNA polymerase subunit alpha"/>
    <property type="match status" value="1"/>
</dbReference>
<dbReference type="Gene3D" id="1.10.150.20">
    <property type="entry name" value="5' to 3' exonuclease, C-terminal subdomain"/>
    <property type="match status" value="1"/>
</dbReference>
<dbReference type="Gene3D" id="2.170.120.12">
    <property type="entry name" value="DNA-directed RNA polymerase, insert domain"/>
    <property type="match status" value="1"/>
</dbReference>
<dbReference type="Gene3D" id="3.30.1360.10">
    <property type="entry name" value="RNA polymerase, RBP11-like subunit"/>
    <property type="match status" value="1"/>
</dbReference>
<dbReference type="HAMAP" id="MF_00059">
    <property type="entry name" value="RNApol_bact_RpoA"/>
    <property type="match status" value="1"/>
</dbReference>
<dbReference type="InterPro" id="IPR011262">
    <property type="entry name" value="DNA-dir_RNA_pol_insert"/>
</dbReference>
<dbReference type="InterPro" id="IPR011263">
    <property type="entry name" value="DNA-dir_RNA_pol_RpoA/D/Rpb3"/>
</dbReference>
<dbReference type="InterPro" id="IPR011773">
    <property type="entry name" value="DNA-dir_RpoA"/>
</dbReference>
<dbReference type="InterPro" id="IPR036603">
    <property type="entry name" value="RBP11-like"/>
</dbReference>
<dbReference type="InterPro" id="IPR011260">
    <property type="entry name" value="RNAP_asu_C"/>
</dbReference>
<dbReference type="InterPro" id="IPR036643">
    <property type="entry name" value="RNApol_insert_sf"/>
</dbReference>
<dbReference type="NCBIfam" id="NF003513">
    <property type="entry name" value="PRK05182.1-2"/>
    <property type="match status" value="1"/>
</dbReference>
<dbReference type="NCBIfam" id="NF003519">
    <property type="entry name" value="PRK05182.2-5"/>
    <property type="match status" value="1"/>
</dbReference>
<dbReference type="NCBIfam" id="TIGR02027">
    <property type="entry name" value="rpoA"/>
    <property type="match status" value="1"/>
</dbReference>
<dbReference type="Pfam" id="PF01000">
    <property type="entry name" value="RNA_pol_A_bac"/>
    <property type="match status" value="1"/>
</dbReference>
<dbReference type="Pfam" id="PF03118">
    <property type="entry name" value="RNA_pol_A_CTD"/>
    <property type="match status" value="1"/>
</dbReference>
<dbReference type="Pfam" id="PF01193">
    <property type="entry name" value="RNA_pol_L"/>
    <property type="match status" value="1"/>
</dbReference>
<dbReference type="SMART" id="SM00662">
    <property type="entry name" value="RPOLD"/>
    <property type="match status" value="1"/>
</dbReference>
<dbReference type="SUPFAM" id="SSF47789">
    <property type="entry name" value="C-terminal domain of RNA polymerase alpha subunit"/>
    <property type="match status" value="1"/>
</dbReference>
<dbReference type="SUPFAM" id="SSF56553">
    <property type="entry name" value="Insert subdomain of RNA polymerase alpha subunit"/>
    <property type="match status" value="1"/>
</dbReference>
<dbReference type="SUPFAM" id="SSF55257">
    <property type="entry name" value="RBP11-like subunits of RNA polymerase"/>
    <property type="match status" value="1"/>
</dbReference>
<feature type="chain" id="PRO_0000175418" description="DNA-directed RNA polymerase subunit alpha">
    <location>
        <begin position="1"/>
        <end position="330"/>
    </location>
</feature>
<feature type="region of interest" description="Alpha N-terminal domain (alpha-NTD)" evidence="1">
    <location>
        <begin position="1"/>
        <end position="236"/>
    </location>
</feature>
<feature type="region of interest" description="Alpha C-terminal domain (alpha-CTD)" evidence="1">
    <location>
        <begin position="250"/>
        <end position="330"/>
    </location>
</feature>
<gene>
    <name evidence="1" type="primary">rpoA</name>
    <name type="ordered locus">VV1_0736</name>
</gene>
<keyword id="KW-0240">DNA-directed RNA polymerase</keyword>
<keyword id="KW-0548">Nucleotidyltransferase</keyword>
<keyword id="KW-0804">Transcription</keyword>
<keyword id="KW-0808">Transferase</keyword>
<name>RPOA_VIBVU</name>
<sequence length="330" mass="36459">MQGSVTEFLKPRLVDIEQISSTHAKVTLEPLERGFGHTLGNALRRILLSSMPGCAVTEVEIEGVLHEYSTKEGVQEDILEILLNLKGLAVRVAEGKDEVFITLNKSGSGPVVAGDITHDGDVEIANPEHVICHLTDDNAEIAMRIKVERGRGYVPASARIHTEEDERPIGRLLVDATYSPVDKIAYAVEAARVEQRTDLDKLVIDMETNGTLEPEEAIRRAATILAEQLDAFVDLRDVRVPEEKEEKPEFDPILLRPVDDLELTVRSANCLKAEAIHYIGDLVQRTEVELLKTPNLGKKSLTEIKDVLASRGLSLGMRLENWPPASIAED</sequence>
<comment type="function">
    <text evidence="1">DNA-dependent RNA polymerase catalyzes the transcription of DNA into RNA using the four ribonucleoside triphosphates as substrates.</text>
</comment>
<comment type="catalytic activity">
    <reaction evidence="1">
        <text>RNA(n) + a ribonucleoside 5'-triphosphate = RNA(n+1) + diphosphate</text>
        <dbReference type="Rhea" id="RHEA:21248"/>
        <dbReference type="Rhea" id="RHEA-COMP:14527"/>
        <dbReference type="Rhea" id="RHEA-COMP:17342"/>
        <dbReference type="ChEBI" id="CHEBI:33019"/>
        <dbReference type="ChEBI" id="CHEBI:61557"/>
        <dbReference type="ChEBI" id="CHEBI:140395"/>
        <dbReference type="EC" id="2.7.7.6"/>
    </reaction>
</comment>
<comment type="subunit">
    <text evidence="1">Homodimer. The RNAP catalytic core consists of 2 alpha, 1 beta, 1 beta' and 1 omega subunit. When a sigma factor is associated with the core the holoenzyme is formed, which can initiate transcription.</text>
</comment>
<comment type="domain">
    <text evidence="1">The N-terminal domain is essential for RNAP assembly and basal transcription, whereas the C-terminal domain is involved in interaction with transcriptional regulators and with upstream promoter elements.</text>
</comment>
<comment type="similarity">
    <text evidence="1">Belongs to the RNA polymerase alpha chain family.</text>
</comment>
<organism>
    <name type="scientific">Vibrio vulnificus (strain CMCP6)</name>
    <dbReference type="NCBI Taxonomy" id="216895"/>
    <lineage>
        <taxon>Bacteria</taxon>
        <taxon>Pseudomonadati</taxon>
        <taxon>Pseudomonadota</taxon>
        <taxon>Gammaproteobacteria</taxon>
        <taxon>Vibrionales</taxon>
        <taxon>Vibrionaceae</taxon>
        <taxon>Vibrio</taxon>
    </lineage>
</organism>
<protein>
    <recommendedName>
        <fullName evidence="1">DNA-directed RNA polymerase subunit alpha</fullName>
        <shortName evidence="1">RNAP subunit alpha</shortName>
        <ecNumber evidence="1">2.7.7.6</ecNumber>
    </recommendedName>
    <alternativeName>
        <fullName evidence="1">RNA polymerase subunit alpha</fullName>
    </alternativeName>
    <alternativeName>
        <fullName evidence="1">Transcriptase subunit alpha</fullName>
    </alternativeName>
</protein>